<accession>P09921</accession>
<keyword id="KW-0022">Alpha-amylase inhibitor</keyword>
<keyword id="KW-0903">Direct protein sequencing</keyword>
<keyword id="KW-1015">Disulfide bond</keyword>
<organism>
    <name type="scientific">Streptomyces olivaceoviridis</name>
    <name type="common">Streptomyces corchorusii</name>
    <dbReference type="NCBI Taxonomy" id="1921"/>
    <lineage>
        <taxon>Bacteria</taxon>
        <taxon>Bacillati</taxon>
        <taxon>Actinomycetota</taxon>
        <taxon>Actinomycetes</taxon>
        <taxon>Kitasatosporales</taxon>
        <taxon>Streptomycetaceae</taxon>
        <taxon>Streptomyces</taxon>
    </lineage>
</organism>
<sequence length="73" mass="7424">ASEPAPACVVMYESWRYTTAANNCADTVSVSVAYQDGATGPCATLPPGAVTTVGEGYLGEHGHPDHLALCPSS</sequence>
<dbReference type="SMR" id="P09921"/>
<dbReference type="GO" id="GO:0015066">
    <property type="term" value="F:alpha-amylase inhibitor activity"/>
    <property type="evidence" value="ECO:0007669"/>
    <property type="project" value="UniProtKB-KW"/>
</dbReference>
<dbReference type="Gene3D" id="2.60.40.20">
    <property type="entry name" value="Alpha-amylase inhibitor"/>
    <property type="match status" value="1"/>
</dbReference>
<dbReference type="InterPro" id="IPR000833">
    <property type="entry name" value="A-amylase_inhib"/>
</dbReference>
<dbReference type="InterPro" id="IPR036379">
    <property type="entry name" value="A-amylase_inhib_sf"/>
</dbReference>
<dbReference type="Pfam" id="PF01356">
    <property type="entry name" value="A_amylase_inhib"/>
    <property type="match status" value="1"/>
</dbReference>
<dbReference type="PIRSF" id="PIRSF001658">
    <property type="entry name" value="Amylase_inhib"/>
    <property type="match status" value="1"/>
</dbReference>
<dbReference type="SMART" id="SM00783">
    <property type="entry name" value="A_amylase_inhib"/>
    <property type="match status" value="1"/>
</dbReference>
<dbReference type="SUPFAM" id="SSF49498">
    <property type="entry name" value="alpha-Amylase inhibitor tendamistat"/>
    <property type="match status" value="1"/>
</dbReference>
<evidence type="ECO:0000250" key="1"/>
<protein>
    <recommendedName>
        <fullName>Alpha-amylase inhibitor Paim-1</fullName>
    </recommendedName>
    <alternativeName>
        <fullName>Pig pancreatic alpha-amylase inhibitor of microbes I</fullName>
        <shortName>Paim I</shortName>
    </alternativeName>
</protein>
<name>IAA1_STROI</name>
<comment type="function">
    <text>Inhibits mammalian alpha-amylases specifically but has no action on plant and microbial alpha-amylases.</text>
</comment>
<comment type="miscellaneous">
    <text>PAIM I inhibits alpha-amylases from pig, dog, cow, horse, but has no activity against human salivary and pancreatic amylases.</text>
</comment>
<feature type="chain" id="PRO_0000203591" description="Alpha-amylase inhibitor Paim-1">
    <location>
        <begin position="1"/>
        <end position="73"/>
    </location>
</feature>
<feature type="disulfide bond" evidence="1">
    <location>
        <begin position="8"/>
        <end position="24"/>
    </location>
</feature>
<feature type="disulfide bond" evidence="1">
    <location>
        <begin position="42"/>
        <end position="70"/>
    </location>
</feature>
<reference key="1">
    <citation type="journal article" date="1987" name="Biochemistry">
        <title>Primary structure of Paim I, an alpha-amylase inhibitor from Streptomyces corchorushii, determined by the combination of Edman degradation and fast atom bombardment mass spectrometry.</title>
        <authorList>
            <person name="Hirayama K."/>
            <person name="Takahashi R."/>
            <person name="Akashi S."/>
            <person name="Fukuhara K."/>
            <person name="Oouchi N."/>
            <person name="Murai A."/>
            <person name="Arai M."/>
            <person name="Murao S."/>
            <person name="Tanaka K."/>
            <person name="Nojima I."/>
        </authorList>
    </citation>
    <scope>PROTEIN SEQUENCE</scope>
</reference>
<proteinExistence type="evidence at protein level"/>